<organism>
    <name type="scientific">Caenorhabditis elegans</name>
    <dbReference type="NCBI Taxonomy" id="6239"/>
    <lineage>
        <taxon>Eukaryota</taxon>
        <taxon>Metazoa</taxon>
        <taxon>Ecdysozoa</taxon>
        <taxon>Nematoda</taxon>
        <taxon>Chromadorea</taxon>
        <taxon>Rhabditida</taxon>
        <taxon>Rhabditina</taxon>
        <taxon>Rhabditomorpha</taxon>
        <taxon>Rhabditoidea</taxon>
        <taxon>Rhabditidae</taxon>
        <taxon>Peloderinae</taxon>
        <taxon>Caenorhabditis</taxon>
    </lineage>
</organism>
<feature type="chain" id="PRO_0000303186" description="Mediator of RNA polymerase II transcription subunit 7">
    <location>
        <begin position="1"/>
        <end position="251"/>
    </location>
</feature>
<feature type="region of interest" description="Disordered" evidence="2">
    <location>
        <begin position="1"/>
        <end position="38"/>
    </location>
</feature>
<feature type="compositionally biased region" description="Polar residues" evidence="2">
    <location>
        <begin position="22"/>
        <end position="32"/>
    </location>
</feature>
<feature type="splice variant" id="VSP_028004" description="In isoform a." evidence="5">
    <original>N</original>
    <variation>NDS</variation>
    <location>
        <position position="30"/>
    </location>
</feature>
<comment type="function">
    <text evidence="1 3 4">Component of the Mediator complex, a coactivator involved in the regulated transcription of nearly all RNA polymerase II-dependent genes. Mediator functions as a bridge to convey information from gene-specific regulatory proteins to the basal RNA polymerase II transcription machinery. Mediator is recruited to promoters by direct interactions with regulatory proteins and serves as a scaffold for the assembly of a functional preinitiation complex with RNA polymerase II and the general transcription factors (By similarity). Required for germ cell development and gonadal growth.</text>
</comment>
<comment type="subunit">
    <text evidence="1 3">Component of the Mediator complex (By similarity). Interacts with mdt-10 and mdt-21. Interacts with RNA polymerase II.</text>
</comment>
<comment type="interaction">
    <interactant intactId="EBI-1533863">
        <id>Q95Q17</id>
    </interactant>
    <interactant intactId="EBI-1533858">
        <id>Q6BER6</id>
        <label>mdt-21</label>
    </interactant>
    <organismsDiffer>false</organismsDiffer>
    <experiments>2</experiments>
</comment>
<comment type="subcellular location">
    <subcellularLocation>
        <location evidence="1">Nucleus</location>
    </subcellularLocation>
</comment>
<comment type="alternative products">
    <event type="alternative splicing"/>
    <isoform>
        <id>Q95Q17-1</id>
        <name>b</name>
        <sequence type="displayed"/>
    </isoform>
    <isoform>
        <id>Q95Q17-2</id>
        <name>a</name>
        <sequence type="described" ref="VSP_028004"/>
    </isoform>
</comment>
<comment type="similarity">
    <text evidence="5">Belongs to the Mediator complex subunit 7 family.</text>
</comment>
<sequence>MLPGFGAQTVSPFPNPPEYASAYTSDRINNGSAPPPPHPLTEFKVYGEEYRLEDDVIAPLKNAGVAELYKNKNNWKTEMKKLNRSAIVAFFDLVEILIRAPDHPMREEKMVDLHTIFINMHHLINEFRPVQARDSVRILQERQIEELSDICKDFKKYLRDGREVVDDQFQMIRGKLPAPPQPSELTRVKLQDGVLHMLQETEASDDVEMKEEEGSEYSKKKARLELLSREDGPPSVVHLLARQFHDISLKK</sequence>
<keyword id="KW-0010">Activator</keyword>
<keyword id="KW-0025">Alternative splicing</keyword>
<keyword id="KW-0217">Developmental protein</keyword>
<keyword id="KW-0539">Nucleus</keyword>
<keyword id="KW-1185">Reference proteome</keyword>
<keyword id="KW-0804">Transcription</keyword>
<keyword id="KW-0805">Transcription regulation</keyword>
<name>MED7_CAEEL</name>
<gene>
    <name type="primary">let-49</name>
    <name type="synonym">mdt-7</name>
    <name type="synonym">med-7</name>
    <name type="ORF">Y54E5B.3</name>
</gene>
<reference key="1">
    <citation type="journal article" date="1998" name="Science">
        <title>Genome sequence of the nematode C. elegans: a platform for investigating biology.</title>
        <authorList>
            <consortium name="The C. elegans sequencing consortium"/>
        </authorList>
    </citation>
    <scope>NUCLEOTIDE SEQUENCE [LARGE SCALE GENOMIC DNA]</scope>
    <scope>ALTERNATIVE SPLICING</scope>
    <source>
        <strain>Bristol N2</strain>
    </source>
</reference>
<reference key="2">
    <citation type="journal article" date="1999" name="Proc. Natl. Acad. Sci. U.S.A.">
        <title>Caenorhabditis elegans mediator complexes are required for developmental-specific transcriptional activation.</title>
        <authorList>
            <person name="Kwon J.Y."/>
            <person name="Park J.M."/>
            <person name="Gim B.S."/>
            <person name="Han S.J."/>
            <person name="Lee J."/>
            <person name="Kim Y.-J."/>
        </authorList>
    </citation>
    <scope>FUNCTION</scope>
    <scope>INTERACTION WITH MDT-10; MDT-21 AND RNA POLYMERASE II</scope>
</reference>
<reference key="3">
    <citation type="journal article" date="2001" name="FEBS Lett.">
        <title>The MED-7 transcriptional mediator encoded by let-49 is required for gonad and germ cell development in Caenorhabditis elegans.</title>
        <authorList>
            <person name="Kwon J.Y."/>
            <person name="Kim-Ha J."/>
            <person name="Lee B.J."/>
            <person name="Lee J."/>
        </authorList>
    </citation>
    <scope>FUNCTION</scope>
</reference>
<dbReference type="EMBL" id="AL032653">
    <property type="protein sequence ID" value="CAA21715.1"/>
    <property type="molecule type" value="Genomic_DNA"/>
</dbReference>
<dbReference type="EMBL" id="AL032653">
    <property type="protein sequence ID" value="CAC42382.1"/>
    <property type="molecule type" value="Genomic_DNA"/>
</dbReference>
<dbReference type="PIR" id="T27166">
    <property type="entry name" value="T27166"/>
</dbReference>
<dbReference type="RefSeq" id="NP_493585.1">
    <molecule id="Q95Q17-2"/>
    <property type="nucleotide sequence ID" value="NM_061184.6"/>
</dbReference>
<dbReference type="RefSeq" id="NP_493586.1">
    <molecule id="Q95Q17-1"/>
    <property type="nucleotide sequence ID" value="NM_061185.9"/>
</dbReference>
<dbReference type="SMR" id="Q95Q17"/>
<dbReference type="BioGRID" id="38736">
    <property type="interactions" value="3"/>
</dbReference>
<dbReference type="FunCoup" id="Q95Q17">
    <property type="interactions" value="2618"/>
</dbReference>
<dbReference type="IntAct" id="Q95Q17">
    <property type="interactions" value="5"/>
</dbReference>
<dbReference type="STRING" id="6239.Y54E5B.3a.1"/>
<dbReference type="PaxDb" id="6239-Y54E5B.3a"/>
<dbReference type="PeptideAtlas" id="Q95Q17"/>
<dbReference type="EnsemblMetazoa" id="Y54E5B.3a.1">
    <molecule id="Q95Q17-2"/>
    <property type="protein sequence ID" value="Y54E5B.3a.1"/>
    <property type="gene ID" value="WBGene00002324"/>
</dbReference>
<dbReference type="EnsemblMetazoa" id="Y54E5B.3b.1">
    <molecule id="Q95Q17-1"/>
    <property type="protein sequence ID" value="Y54E5B.3b.1"/>
    <property type="gene ID" value="WBGene00002324"/>
</dbReference>
<dbReference type="GeneID" id="173353"/>
<dbReference type="KEGG" id="cel:CELE_Y54E5B.3"/>
<dbReference type="UCSC" id="Y54E5B.3b">
    <molecule id="Q95Q17-1"/>
    <property type="organism name" value="c. elegans"/>
</dbReference>
<dbReference type="AGR" id="WB:WBGene00002324"/>
<dbReference type="CTD" id="173353"/>
<dbReference type="WormBase" id="Y54E5B.3a">
    <molecule id="Q95Q17-2"/>
    <property type="protein sequence ID" value="CE19227"/>
    <property type="gene ID" value="WBGene00002324"/>
    <property type="gene designation" value="let-49"/>
</dbReference>
<dbReference type="WormBase" id="Y54E5B.3b">
    <molecule id="Q95Q17-1"/>
    <property type="protein sequence ID" value="CE28136"/>
    <property type="gene ID" value="WBGene00002324"/>
    <property type="gene designation" value="let-49"/>
</dbReference>
<dbReference type="eggNOG" id="KOG0570">
    <property type="taxonomic scope" value="Eukaryota"/>
</dbReference>
<dbReference type="GeneTree" id="ENSGT00940000165241"/>
<dbReference type="InParanoid" id="Q95Q17"/>
<dbReference type="OMA" id="HTIFINM"/>
<dbReference type="OrthoDB" id="10253553at2759"/>
<dbReference type="PhylomeDB" id="Q95Q17"/>
<dbReference type="PRO" id="PR:Q95Q17"/>
<dbReference type="Proteomes" id="UP000001940">
    <property type="component" value="Chromosome I"/>
</dbReference>
<dbReference type="Bgee" id="WBGene00002324">
    <property type="expression patterns" value="Expressed in germ line (C elegans) and 4 other cell types or tissues"/>
</dbReference>
<dbReference type="GO" id="GO:0070847">
    <property type="term" value="C:core mediator complex"/>
    <property type="evidence" value="ECO:0000318"/>
    <property type="project" value="GO_Central"/>
</dbReference>
<dbReference type="GO" id="GO:0016592">
    <property type="term" value="C:mediator complex"/>
    <property type="evidence" value="ECO:0000318"/>
    <property type="project" value="GO_Central"/>
</dbReference>
<dbReference type="GO" id="GO:0003712">
    <property type="term" value="F:transcription coregulator activity"/>
    <property type="evidence" value="ECO:0007669"/>
    <property type="project" value="InterPro"/>
</dbReference>
<dbReference type="GO" id="GO:0009792">
    <property type="term" value="P:embryo development ending in birth or egg hatching"/>
    <property type="evidence" value="ECO:0000316"/>
    <property type="project" value="WormBase"/>
</dbReference>
<dbReference type="GO" id="GO:0006357">
    <property type="term" value="P:regulation of transcription by RNA polymerase II"/>
    <property type="evidence" value="ECO:0000318"/>
    <property type="project" value="GO_Central"/>
</dbReference>
<dbReference type="GO" id="GO:0022414">
    <property type="term" value="P:reproductive process"/>
    <property type="evidence" value="ECO:0000315"/>
    <property type="project" value="WormBase"/>
</dbReference>
<dbReference type="Gene3D" id="6.10.140.200">
    <property type="match status" value="1"/>
</dbReference>
<dbReference type="InterPro" id="IPR037212">
    <property type="entry name" value="Med7/Med21-like"/>
</dbReference>
<dbReference type="InterPro" id="IPR009244">
    <property type="entry name" value="Mediatior_Med7"/>
</dbReference>
<dbReference type="InterPro" id="IPR044888">
    <property type="entry name" value="Mediatior_Med7_sf"/>
</dbReference>
<dbReference type="PANTHER" id="PTHR21428">
    <property type="entry name" value="MEDIATOR OF RNA POLYMERASE II TRANSCRIPTION SUBUNIT 7"/>
    <property type="match status" value="1"/>
</dbReference>
<dbReference type="PANTHER" id="PTHR21428:SF11">
    <property type="entry name" value="MEDIATOR OF RNA POLYMERASE II TRANSCRIPTION SUBUNIT 7"/>
    <property type="match status" value="1"/>
</dbReference>
<dbReference type="Pfam" id="PF05983">
    <property type="entry name" value="Med7"/>
    <property type="match status" value="1"/>
</dbReference>
<dbReference type="SUPFAM" id="SSF140718">
    <property type="entry name" value="Mediator hinge subcomplex-like"/>
    <property type="match status" value="1"/>
</dbReference>
<proteinExistence type="evidence at protein level"/>
<evidence type="ECO:0000250" key="1"/>
<evidence type="ECO:0000256" key="2">
    <source>
        <dbReference type="SAM" id="MobiDB-lite"/>
    </source>
</evidence>
<evidence type="ECO:0000269" key="3">
    <source>
    </source>
</evidence>
<evidence type="ECO:0000269" key="4">
    <source>
    </source>
</evidence>
<evidence type="ECO:0000305" key="5"/>
<accession>Q95Q17</accession>
<accession>Q9XWF7</accession>
<protein>
    <recommendedName>
        <fullName>Mediator of RNA polymerase II transcription subunit 7</fullName>
    </recommendedName>
    <alternativeName>
        <fullName>CeMED7</fullName>
        <shortName>MED-7</shortName>
    </alternativeName>
    <alternativeName>
        <fullName>Lethal protein 49</fullName>
    </alternativeName>
    <alternativeName>
        <fullName>Mediator complex subunit 7</fullName>
    </alternativeName>
</protein>